<protein>
    <recommendedName>
        <fullName evidence="1">GTPase Era</fullName>
    </recommendedName>
</protein>
<reference key="1">
    <citation type="journal article" date="2004" name="Nucleic Acids Res.">
        <title>Whole genome comparisons of serotype 4b and 1/2a strains of the food-borne pathogen Listeria monocytogenes reveal new insights into the core genome components of this species.</title>
        <authorList>
            <person name="Nelson K.E."/>
            <person name="Fouts D.E."/>
            <person name="Mongodin E.F."/>
            <person name="Ravel J."/>
            <person name="DeBoy R.T."/>
            <person name="Kolonay J.F."/>
            <person name="Rasko D.A."/>
            <person name="Angiuoli S.V."/>
            <person name="Gill S.R."/>
            <person name="Paulsen I.T."/>
            <person name="Peterson J.D."/>
            <person name="White O."/>
            <person name="Nelson W.C."/>
            <person name="Nierman W.C."/>
            <person name="Beanan M.J."/>
            <person name="Brinkac L.M."/>
            <person name="Daugherty S.C."/>
            <person name="Dodson R.J."/>
            <person name="Durkin A.S."/>
            <person name="Madupu R."/>
            <person name="Haft D.H."/>
            <person name="Selengut J."/>
            <person name="Van Aken S.E."/>
            <person name="Khouri H.M."/>
            <person name="Fedorova N."/>
            <person name="Forberger H.A."/>
            <person name="Tran B."/>
            <person name="Kathariou S."/>
            <person name="Wonderling L.D."/>
            <person name="Uhlich G.A."/>
            <person name="Bayles D.O."/>
            <person name="Luchansky J.B."/>
            <person name="Fraser C.M."/>
        </authorList>
    </citation>
    <scope>NUCLEOTIDE SEQUENCE [LARGE SCALE GENOMIC DNA]</scope>
    <source>
        <strain>F2365</strain>
    </source>
</reference>
<organism>
    <name type="scientific">Listeria monocytogenes serotype 4b (strain F2365)</name>
    <dbReference type="NCBI Taxonomy" id="265669"/>
    <lineage>
        <taxon>Bacteria</taxon>
        <taxon>Bacillati</taxon>
        <taxon>Bacillota</taxon>
        <taxon>Bacilli</taxon>
        <taxon>Bacillales</taxon>
        <taxon>Listeriaceae</taxon>
        <taxon>Listeria</taxon>
    </lineage>
</organism>
<proteinExistence type="inferred from homology"/>
<dbReference type="EMBL" id="AE017262">
    <property type="protein sequence ID" value="AAT04256.1"/>
    <property type="molecule type" value="Genomic_DNA"/>
</dbReference>
<dbReference type="RefSeq" id="WP_003721968.1">
    <property type="nucleotide sequence ID" value="NC_002973.6"/>
</dbReference>
<dbReference type="SMR" id="Q71ZK8"/>
<dbReference type="KEGG" id="lmf:LMOf2365_1481"/>
<dbReference type="HOGENOM" id="CLU_038009_1_0_9"/>
<dbReference type="GO" id="GO:0005829">
    <property type="term" value="C:cytosol"/>
    <property type="evidence" value="ECO:0007669"/>
    <property type="project" value="TreeGrafter"/>
</dbReference>
<dbReference type="GO" id="GO:0005886">
    <property type="term" value="C:plasma membrane"/>
    <property type="evidence" value="ECO:0007669"/>
    <property type="project" value="UniProtKB-SubCell"/>
</dbReference>
<dbReference type="GO" id="GO:0005525">
    <property type="term" value="F:GTP binding"/>
    <property type="evidence" value="ECO:0007669"/>
    <property type="project" value="UniProtKB-UniRule"/>
</dbReference>
<dbReference type="GO" id="GO:0003924">
    <property type="term" value="F:GTPase activity"/>
    <property type="evidence" value="ECO:0007669"/>
    <property type="project" value="UniProtKB-UniRule"/>
</dbReference>
<dbReference type="GO" id="GO:0043024">
    <property type="term" value="F:ribosomal small subunit binding"/>
    <property type="evidence" value="ECO:0007669"/>
    <property type="project" value="TreeGrafter"/>
</dbReference>
<dbReference type="GO" id="GO:0070181">
    <property type="term" value="F:small ribosomal subunit rRNA binding"/>
    <property type="evidence" value="ECO:0007669"/>
    <property type="project" value="UniProtKB-UniRule"/>
</dbReference>
<dbReference type="GO" id="GO:0000028">
    <property type="term" value="P:ribosomal small subunit assembly"/>
    <property type="evidence" value="ECO:0007669"/>
    <property type="project" value="TreeGrafter"/>
</dbReference>
<dbReference type="CDD" id="cd04163">
    <property type="entry name" value="Era"/>
    <property type="match status" value="1"/>
</dbReference>
<dbReference type="CDD" id="cd22534">
    <property type="entry name" value="KH-II_Era"/>
    <property type="match status" value="1"/>
</dbReference>
<dbReference type="FunFam" id="3.30.300.20:FF:000003">
    <property type="entry name" value="GTPase Era"/>
    <property type="match status" value="1"/>
</dbReference>
<dbReference type="FunFam" id="3.40.50.300:FF:000094">
    <property type="entry name" value="GTPase Era"/>
    <property type="match status" value="1"/>
</dbReference>
<dbReference type="Gene3D" id="3.30.300.20">
    <property type="match status" value="1"/>
</dbReference>
<dbReference type="Gene3D" id="3.40.50.300">
    <property type="entry name" value="P-loop containing nucleotide triphosphate hydrolases"/>
    <property type="match status" value="1"/>
</dbReference>
<dbReference type="HAMAP" id="MF_00367">
    <property type="entry name" value="GTPase_Era"/>
    <property type="match status" value="1"/>
</dbReference>
<dbReference type="InterPro" id="IPR030388">
    <property type="entry name" value="G_ERA_dom"/>
</dbReference>
<dbReference type="InterPro" id="IPR006073">
    <property type="entry name" value="GTP-bd"/>
</dbReference>
<dbReference type="InterPro" id="IPR005662">
    <property type="entry name" value="GTPase_Era-like"/>
</dbReference>
<dbReference type="InterPro" id="IPR015946">
    <property type="entry name" value="KH_dom-like_a/b"/>
</dbReference>
<dbReference type="InterPro" id="IPR004044">
    <property type="entry name" value="KH_dom_type_2"/>
</dbReference>
<dbReference type="InterPro" id="IPR009019">
    <property type="entry name" value="KH_sf_prok-type"/>
</dbReference>
<dbReference type="InterPro" id="IPR027417">
    <property type="entry name" value="P-loop_NTPase"/>
</dbReference>
<dbReference type="InterPro" id="IPR005225">
    <property type="entry name" value="Small_GTP-bd"/>
</dbReference>
<dbReference type="NCBIfam" id="TIGR00436">
    <property type="entry name" value="era"/>
    <property type="match status" value="1"/>
</dbReference>
<dbReference type="NCBIfam" id="NF000908">
    <property type="entry name" value="PRK00089.1"/>
    <property type="match status" value="1"/>
</dbReference>
<dbReference type="NCBIfam" id="TIGR00231">
    <property type="entry name" value="small_GTP"/>
    <property type="match status" value="1"/>
</dbReference>
<dbReference type="PANTHER" id="PTHR42698">
    <property type="entry name" value="GTPASE ERA"/>
    <property type="match status" value="1"/>
</dbReference>
<dbReference type="PANTHER" id="PTHR42698:SF1">
    <property type="entry name" value="GTPASE ERA, MITOCHONDRIAL"/>
    <property type="match status" value="1"/>
</dbReference>
<dbReference type="Pfam" id="PF07650">
    <property type="entry name" value="KH_2"/>
    <property type="match status" value="1"/>
</dbReference>
<dbReference type="Pfam" id="PF01926">
    <property type="entry name" value="MMR_HSR1"/>
    <property type="match status" value="1"/>
</dbReference>
<dbReference type="PRINTS" id="PR00326">
    <property type="entry name" value="GTP1OBG"/>
</dbReference>
<dbReference type="SUPFAM" id="SSF52540">
    <property type="entry name" value="P-loop containing nucleoside triphosphate hydrolases"/>
    <property type="match status" value="1"/>
</dbReference>
<dbReference type="SUPFAM" id="SSF54814">
    <property type="entry name" value="Prokaryotic type KH domain (KH-domain type II)"/>
    <property type="match status" value="1"/>
</dbReference>
<dbReference type="PROSITE" id="PS51713">
    <property type="entry name" value="G_ERA"/>
    <property type="match status" value="1"/>
</dbReference>
<dbReference type="PROSITE" id="PS50823">
    <property type="entry name" value="KH_TYPE_2"/>
    <property type="match status" value="1"/>
</dbReference>
<accession>Q71ZK8</accession>
<gene>
    <name evidence="1" type="primary">era</name>
    <name type="ordered locus">LMOf2365_1481</name>
</gene>
<name>ERA_LISMF</name>
<sequence length="301" mass="34523">MSEPFKSGFVAIVGRPNVGKSTLLNHIIGQKIAIMSDKAQTTRNKVQGVYTTDESQIIFIDTPGIHKPKHKLGDFMVKIALNTFQEVDLIYFVIDASTGFGRGDEFIIEKLKNVQTPVFLLINKIDLIAPEDLFKLIEQYRDLMDFDEIIPISALQGNNVPNLLEQTNANLEIGPMYYPKDQITDHPERFIISELIREQVLQLTREEVPHSVAVVIEGIEKNPKTEKLTINATIIVERSTQKGIIIGKQGQMLKQIGMRARKEIERLLGSKVFLEIWVKVQKNWRDKEHYLQDYGFDREEY</sequence>
<keyword id="KW-1003">Cell membrane</keyword>
<keyword id="KW-0963">Cytoplasm</keyword>
<keyword id="KW-0342">GTP-binding</keyword>
<keyword id="KW-0472">Membrane</keyword>
<keyword id="KW-0547">Nucleotide-binding</keyword>
<keyword id="KW-0690">Ribosome biogenesis</keyword>
<keyword id="KW-0694">RNA-binding</keyword>
<keyword id="KW-0699">rRNA-binding</keyword>
<evidence type="ECO:0000255" key="1">
    <source>
        <dbReference type="HAMAP-Rule" id="MF_00367"/>
    </source>
</evidence>
<evidence type="ECO:0000255" key="2">
    <source>
        <dbReference type="PROSITE-ProRule" id="PRU01050"/>
    </source>
</evidence>
<feature type="chain" id="PRO_0000180025" description="GTPase Era">
    <location>
        <begin position="1"/>
        <end position="301"/>
    </location>
</feature>
<feature type="domain" description="Era-type G" evidence="2">
    <location>
        <begin position="6"/>
        <end position="173"/>
    </location>
</feature>
<feature type="domain" description="KH type-2" evidence="1">
    <location>
        <begin position="204"/>
        <end position="282"/>
    </location>
</feature>
<feature type="region of interest" description="G1" evidence="2">
    <location>
        <begin position="14"/>
        <end position="21"/>
    </location>
</feature>
<feature type="region of interest" description="G2" evidence="2">
    <location>
        <begin position="40"/>
        <end position="44"/>
    </location>
</feature>
<feature type="region of interest" description="G3" evidence="2">
    <location>
        <begin position="61"/>
        <end position="64"/>
    </location>
</feature>
<feature type="region of interest" description="G4" evidence="2">
    <location>
        <begin position="123"/>
        <end position="126"/>
    </location>
</feature>
<feature type="region of interest" description="G5" evidence="2">
    <location>
        <begin position="152"/>
        <end position="154"/>
    </location>
</feature>
<feature type="binding site" evidence="1">
    <location>
        <begin position="14"/>
        <end position="21"/>
    </location>
    <ligand>
        <name>GTP</name>
        <dbReference type="ChEBI" id="CHEBI:37565"/>
    </ligand>
</feature>
<feature type="binding site" evidence="1">
    <location>
        <begin position="61"/>
        <end position="65"/>
    </location>
    <ligand>
        <name>GTP</name>
        <dbReference type="ChEBI" id="CHEBI:37565"/>
    </ligand>
</feature>
<feature type="binding site" evidence="1">
    <location>
        <begin position="123"/>
        <end position="126"/>
    </location>
    <ligand>
        <name>GTP</name>
        <dbReference type="ChEBI" id="CHEBI:37565"/>
    </ligand>
</feature>
<comment type="function">
    <text evidence="1">An essential GTPase that binds both GDP and GTP, with rapid nucleotide exchange. Plays a role in 16S rRNA processing and 30S ribosomal subunit biogenesis and possibly also in cell cycle regulation and energy metabolism.</text>
</comment>
<comment type="subunit">
    <text evidence="1">Monomer.</text>
</comment>
<comment type="subcellular location">
    <subcellularLocation>
        <location>Cytoplasm</location>
    </subcellularLocation>
    <subcellularLocation>
        <location evidence="1">Cell membrane</location>
        <topology evidence="1">Peripheral membrane protein</topology>
    </subcellularLocation>
</comment>
<comment type="similarity">
    <text evidence="1 2">Belongs to the TRAFAC class TrmE-Era-EngA-EngB-Septin-like GTPase superfamily. Era GTPase family.</text>
</comment>